<sequence length="161" mass="16829">QSEPAGPPQPYTFSYDNTDEYGTRIAQEETGDENNNKVGSYSYTDPNGISRTVKYVADAEGFRVTVETNEPGTKTSNPADAQIVSNAATDSYSPSPASSPAKPPSLAVNAAPITIHAVHASPVVHAIHAAPVSYATAHHVTPVIALSHAPLTYTLGRAKSA</sequence>
<comment type="function">
    <text evidence="3">Component of the cuticle of the tick. Binds chitin.</text>
</comment>
<comment type="mass spectrometry" mass="16812.2" method="MALDI" evidence="3"/>
<evidence type="ECO:0000255" key="1">
    <source>
        <dbReference type="PROSITE-ProRule" id="PRU00497"/>
    </source>
</evidence>
<evidence type="ECO:0000256" key="2">
    <source>
        <dbReference type="SAM" id="MobiDB-lite"/>
    </source>
</evidence>
<evidence type="ECO:0000269" key="3">
    <source>
    </source>
</evidence>
<feature type="chain" id="PRO_0000196127" description="Cuticle protein 16.8">
    <location>
        <begin position="1"/>
        <end position="161"/>
    </location>
</feature>
<feature type="domain" description="Chitin-binding type R&amp;R" evidence="1">
    <location>
        <begin position="8"/>
        <end position="74"/>
    </location>
</feature>
<feature type="region of interest" description="Disordered" evidence="2">
    <location>
        <begin position="1"/>
        <end position="44"/>
    </location>
</feature>
<feature type="region of interest" description="Disordered" evidence="2">
    <location>
        <begin position="67"/>
        <end position="103"/>
    </location>
</feature>
<feature type="compositionally biased region" description="Pro residues" evidence="2">
    <location>
        <begin position="1"/>
        <end position="10"/>
    </location>
</feature>
<feature type="compositionally biased region" description="Polar residues" evidence="2">
    <location>
        <begin position="67"/>
        <end position="86"/>
    </location>
</feature>
<feature type="compositionally biased region" description="Low complexity" evidence="2">
    <location>
        <begin position="87"/>
        <end position="103"/>
    </location>
</feature>
<feature type="modified residue" description="Pyrrolidone carboxylic acid" evidence="3">
    <location>
        <position position="1"/>
    </location>
</feature>
<accession>P84252</accession>
<reference key="1">
    <citation type="journal article" date="2005" name="Insect Biochem. Mol. Biol.">
        <title>The extensible alloscutal cuticle of the tick, Ixodes ricinus.</title>
        <authorList>
            <person name="Andersen S.O."/>
            <person name="Roepstorff P."/>
        </authorList>
    </citation>
    <scope>PROTEIN SEQUENCE</scope>
    <scope>FUNCTION</scope>
    <scope>MASS SPECTROMETRY</scope>
    <scope>PYROGLUTAMATE FORMATION AT GLN-1</scope>
    <source>
        <tissue>Cuticle</tissue>
    </source>
</reference>
<name>CU168_IXORI</name>
<proteinExistence type="evidence at protein level"/>
<keyword id="KW-0147">Chitin-binding</keyword>
<keyword id="KW-0193">Cuticle</keyword>
<keyword id="KW-0903">Direct protein sequencing</keyword>
<keyword id="KW-0873">Pyrrolidone carboxylic acid</keyword>
<dbReference type="GO" id="GO:0062129">
    <property type="term" value="C:chitin-based extracellular matrix"/>
    <property type="evidence" value="ECO:0007669"/>
    <property type="project" value="TreeGrafter"/>
</dbReference>
<dbReference type="GO" id="GO:0008061">
    <property type="term" value="F:chitin binding"/>
    <property type="evidence" value="ECO:0007669"/>
    <property type="project" value="UniProtKB-KW"/>
</dbReference>
<dbReference type="GO" id="GO:0008010">
    <property type="term" value="F:structural constituent of chitin-based larval cuticle"/>
    <property type="evidence" value="ECO:0007669"/>
    <property type="project" value="TreeGrafter"/>
</dbReference>
<dbReference type="Gene3D" id="3.10.50.10">
    <property type="match status" value="1"/>
</dbReference>
<dbReference type="InterPro" id="IPR031311">
    <property type="entry name" value="CHIT_BIND_RR_consensus"/>
</dbReference>
<dbReference type="InterPro" id="IPR029070">
    <property type="entry name" value="Chitinase_insertion_sf"/>
</dbReference>
<dbReference type="InterPro" id="IPR050468">
    <property type="entry name" value="Cuticle_Struct_Prot"/>
</dbReference>
<dbReference type="InterPro" id="IPR000618">
    <property type="entry name" value="Insect_cuticle"/>
</dbReference>
<dbReference type="PANTHER" id="PTHR10380">
    <property type="entry name" value="CUTICLE PROTEIN"/>
    <property type="match status" value="1"/>
</dbReference>
<dbReference type="PANTHER" id="PTHR10380:SF173">
    <property type="entry name" value="CUTICULAR PROTEIN 47EF, ISOFORM C-RELATED"/>
    <property type="match status" value="1"/>
</dbReference>
<dbReference type="Pfam" id="PF00379">
    <property type="entry name" value="Chitin_bind_4"/>
    <property type="match status" value="1"/>
</dbReference>
<dbReference type="PRINTS" id="PR00947">
    <property type="entry name" value="CUTICLE"/>
</dbReference>
<dbReference type="PROSITE" id="PS00233">
    <property type="entry name" value="CHIT_BIND_RR_1"/>
    <property type="match status" value="1"/>
</dbReference>
<dbReference type="PROSITE" id="PS51155">
    <property type="entry name" value="CHIT_BIND_RR_2"/>
    <property type="match status" value="1"/>
</dbReference>
<protein>
    <recommendedName>
        <fullName>Cuticle protein 16.8</fullName>
    </recommendedName>
    <alternativeName>
        <fullName>Ir-ACP16.8</fullName>
    </alternativeName>
</protein>
<organism>
    <name type="scientific">Ixodes ricinus</name>
    <name type="common">Common tick</name>
    <name type="synonym">Acarus ricinus</name>
    <dbReference type="NCBI Taxonomy" id="34613"/>
    <lineage>
        <taxon>Eukaryota</taxon>
        <taxon>Metazoa</taxon>
        <taxon>Ecdysozoa</taxon>
        <taxon>Arthropoda</taxon>
        <taxon>Chelicerata</taxon>
        <taxon>Arachnida</taxon>
        <taxon>Acari</taxon>
        <taxon>Parasitiformes</taxon>
        <taxon>Ixodida</taxon>
        <taxon>Ixodoidea</taxon>
        <taxon>Ixodidae</taxon>
        <taxon>Ixodinae</taxon>
        <taxon>Ixodes</taxon>
    </lineage>
</organism>